<protein>
    <recommendedName>
        <fullName evidence="1">ATP-dependent Clp protease proteolytic subunit</fullName>
        <ecNumber evidence="1">3.4.21.92</ecNumber>
    </recommendedName>
    <alternativeName>
        <fullName evidence="1">Endopeptidase Clp</fullName>
    </alternativeName>
</protein>
<reference key="1">
    <citation type="journal article" date="2007" name="Science">
        <title>Legumes symbioses: absence of nod genes in photosynthetic bradyrhizobia.</title>
        <authorList>
            <person name="Giraud E."/>
            <person name="Moulin L."/>
            <person name="Vallenet D."/>
            <person name="Barbe V."/>
            <person name="Cytryn E."/>
            <person name="Avarre J.-C."/>
            <person name="Jaubert M."/>
            <person name="Simon D."/>
            <person name="Cartieaux F."/>
            <person name="Prin Y."/>
            <person name="Bena G."/>
            <person name="Hannibal L."/>
            <person name="Fardoux J."/>
            <person name="Kojadinovic M."/>
            <person name="Vuillet L."/>
            <person name="Lajus A."/>
            <person name="Cruveiller S."/>
            <person name="Rouy Z."/>
            <person name="Mangenot S."/>
            <person name="Segurens B."/>
            <person name="Dossat C."/>
            <person name="Franck W.L."/>
            <person name="Chang W.-S."/>
            <person name="Saunders E."/>
            <person name="Bruce D."/>
            <person name="Richardson P."/>
            <person name="Normand P."/>
            <person name="Dreyfus B."/>
            <person name="Pignol D."/>
            <person name="Stacey G."/>
            <person name="Emerich D."/>
            <person name="Vermeglio A."/>
            <person name="Medigue C."/>
            <person name="Sadowsky M."/>
        </authorList>
    </citation>
    <scope>NUCLEOTIDE SEQUENCE [LARGE SCALE GENOMIC DNA]</scope>
    <source>
        <strain>BTAi1 / ATCC BAA-1182</strain>
    </source>
</reference>
<gene>
    <name evidence="1" type="primary">clpP</name>
    <name type="ordered locus">BBta_4573</name>
</gene>
<name>CLPP_BRASB</name>
<keyword id="KW-0963">Cytoplasm</keyword>
<keyword id="KW-0378">Hydrolase</keyword>
<keyword id="KW-0645">Protease</keyword>
<keyword id="KW-1185">Reference proteome</keyword>
<keyword id="KW-0720">Serine protease</keyword>
<accession>A5EKA8</accession>
<comment type="function">
    <text evidence="1">Cleaves peptides in various proteins in a process that requires ATP hydrolysis. Has a chymotrypsin-like activity. Plays a major role in the degradation of misfolded proteins.</text>
</comment>
<comment type="catalytic activity">
    <reaction evidence="1">
        <text>Hydrolysis of proteins to small peptides in the presence of ATP and magnesium. alpha-casein is the usual test substrate. In the absence of ATP, only oligopeptides shorter than five residues are hydrolyzed (such as succinyl-Leu-Tyr-|-NHMec, and Leu-Tyr-Leu-|-Tyr-Trp, in which cleavage of the -Tyr-|-Leu- and -Tyr-|-Trp bonds also occurs).</text>
        <dbReference type="EC" id="3.4.21.92"/>
    </reaction>
</comment>
<comment type="subunit">
    <text evidence="1">Fourteen ClpP subunits assemble into 2 heptameric rings which stack back to back to give a disk-like structure with a central cavity, resembling the structure of eukaryotic proteasomes.</text>
</comment>
<comment type="subcellular location">
    <subcellularLocation>
        <location evidence="1">Cytoplasm</location>
    </subcellularLocation>
</comment>
<comment type="similarity">
    <text evidence="1">Belongs to the peptidase S14 family.</text>
</comment>
<dbReference type="EC" id="3.4.21.92" evidence="1"/>
<dbReference type="EMBL" id="CP000494">
    <property type="protein sequence ID" value="ABQ36602.1"/>
    <property type="molecule type" value="Genomic_DNA"/>
</dbReference>
<dbReference type="RefSeq" id="WP_012044596.1">
    <property type="nucleotide sequence ID" value="NC_009485.1"/>
</dbReference>
<dbReference type="SMR" id="A5EKA8"/>
<dbReference type="STRING" id="288000.BBta_4573"/>
<dbReference type="MEROPS" id="S14.001"/>
<dbReference type="KEGG" id="bbt:BBta_4573"/>
<dbReference type="eggNOG" id="COG0740">
    <property type="taxonomic scope" value="Bacteria"/>
</dbReference>
<dbReference type="HOGENOM" id="CLU_058707_3_2_5"/>
<dbReference type="OrthoDB" id="9802800at2"/>
<dbReference type="Proteomes" id="UP000000246">
    <property type="component" value="Chromosome"/>
</dbReference>
<dbReference type="GO" id="GO:0005737">
    <property type="term" value="C:cytoplasm"/>
    <property type="evidence" value="ECO:0007669"/>
    <property type="project" value="UniProtKB-SubCell"/>
</dbReference>
<dbReference type="GO" id="GO:0009368">
    <property type="term" value="C:endopeptidase Clp complex"/>
    <property type="evidence" value="ECO:0007669"/>
    <property type="project" value="TreeGrafter"/>
</dbReference>
<dbReference type="GO" id="GO:0004176">
    <property type="term" value="F:ATP-dependent peptidase activity"/>
    <property type="evidence" value="ECO:0007669"/>
    <property type="project" value="InterPro"/>
</dbReference>
<dbReference type="GO" id="GO:0051117">
    <property type="term" value="F:ATPase binding"/>
    <property type="evidence" value="ECO:0007669"/>
    <property type="project" value="TreeGrafter"/>
</dbReference>
<dbReference type="GO" id="GO:0004252">
    <property type="term" value="F:serine-type endopeptidase activity"/>
    <property type="evidence" value="ECO:0007669"/>
    <property type="project" value="UniProtKB-UniRule"/>
</dbReference>
<dbReference type="GO" id="GO:0006515">
    <property type="term" value="P:protein quality control for misfolded or incompletely synthesized proteins"/>
    <property type="evidence" value="ECO:0007669"/>
    <property type="project" value="TreeGrafter"/>
</dbReference>
<dbReference type="CDD" id="cd07017">
    <property type="entry name" value="S14_ClpP_2"/>
    <property type="match status" value="1"/>
</dbReference>
<dbReference type="FunFam" id="3.90.226.10:FF:000001">
    <property type="entry name" value="ATP-dependent Clp protease proteolytic subunit"/>
    <property type="match status" value="1"/>
</dbReference>
<dbReference type="Gene3D" id="3.90.226.10">
    <property type="entry name" value="2-enoyl-CoA Hydratase, Chain A, domain 1"/>
    <property type="match status" value="1"/>
</dbReference>
<dbReference type="HAMAP" id="MF_00444">
    <property type="entry name" value="ClpP"/>
    <property type="match status" value="1"/>
</dbReference>
<dbReference type="InterPro" id="IPR001907">
    <property type="entry name" value="ClpP"/>
</dbReference>
<dbReference type="InterPro" id="IPR029045">
    <property type="entry name" value="ClpP/crotonase-like_dom_sf"/>
</dbReference>
<dbReference type="InterPro" id="IPR023562">
    <property type="entry name" value="ClpP/TepA"/>
</dbReference>
<dbReference type="InterPro" id="IPR033135">
    <property type="entry name" value="ClpP_His_AS"/>
</dbReference>
<dbReference type="NCBIfam" id="NF001368">
    <property type="entry name" value="PRK00277.1"/>
    <property type="match status" value="1"/>
</dbReference>
<dbReference type="NCBIfam" id="NF009205">
    <property type="entry name" value="PRK12553.1"/>
    <property type="match status" value="1"/>
</dbReference>
<dbReference type="PANTHER" id="PTHR10381">
    <property type="entry name" value="ATP-DEPENDENT CLP PROTEASE PROTEOLYTIC SUBUNIT"/>
    <property type="match status" value="1"/>
</dbReference>
<dbReference type="PANTHER" id="PTHR10381:SF70">
    <property type="entry name" value="ATP-DEPENDENT CLP PROTEASE PROTEOLYTIC SUBUNIT"/>
    <property type="match status" value="1"/>
</dbReference>
<dbReference type="Pfam" id="PF00574">
    <property type="entry name" value="CLP_protease"/>
    <property type="match status" value="1"/>
</dbReference>
<dbReference type="PRINTS" id="PR00127">
    <property type="entry name" value="CLPPROTEASEP"/>
</dbReference>
<dbReference type="SUPFAM" id="SSF52096">
    <property type="entry name" value="ClpP/crotonase"/>
    <property type="match status" value="1"/>
</dbReference>
<dbReference type="PROSITE" id="PS00382">
    <property type="entry name" value="CLP_PROTEASE_HIS"/>
    <property type="match status" value="1"/>
</dbReference>
<evidence type="ECO:0000255" key="1">
    <source>
        <dbReference type="HAMAP-Rule" id="MF_00444"/>
    </source>
</evidence>
<sequence length="210" mass="23277">MRDPVETYMNLVPMVVEQTNRGERAYDIFSRLLKERIIFVTGPVEDGMATLIVAQLLFLEAENPKKEIAMYINSPGGVVTSGLAIYDTMQFIRPAVSTLCTGQAASMGSLLLCAGHKDMRFSLPNSRIMVHQPSGGFQGQATDIMLHAQEILSLKKRLNEIYVKHTGQSYKAIEDALERDKFLTAEAAAEFGLIDKVIDKRPEDPAPMAK</sequence>
<feature type="chain" id="PRO_1000026067" description="ATP-dependent Clp protease proteolytic subunit">
    <location>
        <begin position="1"/>
        <end position="210"/>
    </location>
</feature>
<feature type="active site" description="Nucleophile" evidence="1">
    <location>
        <position position="106"/>
    </location>
</feature>
<feature type="active site" evidence="1">
    <location>
        <position position="131"/>
    </location>
</feature>
<proteinExistence type="inferred from homology"/>
<organism>
    <name type="scientific">Bradyrhizobium sp. (strain BTAi1 / ATCC BAA-1182)</name>
    <dbReference type="NCBI Taxonomy" id="288000"/>
    <lineage>
        <taxon>Bacteria</taxon>
        <taxon>Pseudomonadati</taxon>
        <taxon>Pseudomonadota</taxon>
        <taxon>Alphaproteobacteria</taxon>
        <taxon>Hyphomicrobiales</taxon>
        <taxon>Nitrobacteraceae</taxon>
        <taxon>Bradyrhizobium</taxon>
    </lineage>
</organism>